<evidence type="ECO:0000250" key="1"/>
<evidence type="ECO:0000250" key="2">
    <source>
        <dbReference type="UniProtKB" id="P80303"/>
    </source>
</evidence>
<evidence type="ECO:0000250" key="3">
    <source>
        <dbReference type="UniProtKB" id="Q9JI85"/>
    </source>
</evidence>
<evidence type="ECO:0000255" key="4"/>
<evidence type="ECO:0000255" key="5">
    <source>
        <dbReference type="PROSITE-ProRule" id="PRU00448"/>
    </source>
</evidence>
<evidence type="ECO:0000256" key="6">
    <source>
        <dbReference type="SAM" id="MobiDB-lite"/>
    </source>
</evidence>
<evidence type="ECO:0000269" key="7">
    <source>
    </source>
</evidence>
<evidence type="ECO:0000305" key="8"/>
<feature type="signal peptide" evidence="4">
    <location>
        <begin position="1"/>
        <end position="24"/>
    </location>
</feature>
<feature type="chain" id="PRO_0000004166" description="Nucleobindin-2">
    <location>
        <begin position="25"/>
        <end position="420"/>
    </location>
</feature>
<feature type="chain" id="PRO_0000419820" description="Nesfatin-1">
    <location>
        <begin position="25"/>
        <end position="106"/>
    </location>
</feature>
<feature type="domain" description="EF-hand 1" evidence="5">
    <location>
        <begin position="241"/>
        <end position="276"/>
    </location>
</feature>
<feature type="domain" description="EF-hand 2" evidence="5">
    <location>
        <begin position="293"/>
        <end position="328"/>
    </location>
</feature>
<feature type="DNA-binding region" evidence="1">
    <location>
        <begin position="171"/>
        <end position="223"/>
    </location>
</feature>
<feature type="region of interest" description="Disordered" evidence="6">
    <location>
        <begin position="193"/>
        <end position="225"/>
    </location>
</feature>
<feature type="region of interest" description="Binds to necdin">
    <location>
        <begin position="213"/>
        <end position="420"/>
    </location>
</feature>
<feature type="region of interest" description="Disordered" evidence="6">
    <location>
        <begin position="365"/>
        <end position="420"/>
    </location>
</feature>
<feature type="short sequence motif" description="GBA" evidence="2">
    <location>
        <begin position="304"/>
        <end position="334"/>
    </location>
</feature>
<feature type="compositionally biased region" description="Basic and acidic residues" evidence="6">
    <location>
        <begin position="365"/>
        <end position="389"/>
    </location>
</feature>
<feature type="binding site" evidence="5">
    <location>
        <position position="254"/>
    </location>
    <ligand>
        <name>Ca(2+)</name>
        <dbReference type="ChEBI" id="CHEBI:29108"/>
        <label>1</label>
    </ligand>
</feature>
<feature type="binding site" evidence="5">
    <location>
        <position position="256"/>
    </location>
    <ligand>
        <name>Ca(2+)</name>
        <dbReference type="ChEBI" id="CHEBI:29108"/>
        <label>1</label>
    </ligand>
</feature>
<feature type="binding site" evidence="5">
    <location>
        <position position="258"/>
    </location>
    <ligand>
        <name>Ca(2+)</name>
        <dbReference type="ChEBI" id="CHEBI:29108"/>
        <label>1</label>
    </ligand>
</feature>
<feature type="binding site" evidence="5">
    <location>
        <position position="265"/>
    </location>
    <ligand>
        <name>Ca(2+)</name>
        <dbReference type="ChEBI" id="CHEBI:29108"/>
        <label>1</label>
    </ligand>
</feature>
<feature type="binding site" evidence="5">
    <location>
        <position position="306"/>
    </location>
    <ligand>
        <name>Ca(2+)</name>
        <dbReference type="ChEBI" id="CHEBI:29108"/>
        <label>2</label>
    </ligand>
</feature>
<feature type="binding site" evidence="5">
    <location>
        <position position="308"/>
    </location>
    <ligand>
        <name>Ca(2+)</name>
        <dbReference type="ChEBI" id="CHEBI:29108"/>
        <label>2</label>
    </ligand>
</feature>
<feature type="binding site" evidence="5">
    <location>
        <position position="310"/>
    </location>
    <ligand>
        <name>Ca(2+)</name>
        <dbReference type="ChEBI" id="CHEBI:29108"/>
        <label>2</label>
    </ligand>
</feature>
<feature type="binding site" evidence="5">
    <location>
        <position position="317"/>
    </location>
    <ligand>
        <name>Ca(2+)</name>
        <dbReference type="ChEBI" id="CHEBI:29108"/>
        <label>2</label>
    </ligand>
</feature>
<feature type="modified residue" description="Phosphoserine" evidence="2">
    <location>
        <position position="332"/>
    </location>
</feature>
<feature type="sequence conflict" description="In Ref. 2; CAA10858." evidence="8" ref="2">
    <original>M</original>
    <variation>T</variation>
    <location>
        <position position="18"/>
    </location>
</feature>
<name>NUCB2_MOUSE</name>
<sequence length="420" mass="50304">MRWRIIQVQYCFLLVPCMLTALEAVPIDVDKTKVHNTEPVENARIEPPDTGLYYDEYLKQVIEVLETDPHFREKLQKADIEEIRSGRLSQELDLVSHKVRTRLDELKRQEVGRLRMLIKAKLDALQDTGMNHHLLLKQFEHLNHQNPNTFESRDLDMLIKAATADLEQYDRTRHEEFKKYEMMKEHERREYLKTLSEEKRKEEESKFEEMKRKHEDHPKVNHPGSKDQLKEVWEETDGLDPNDFDPKTFFKLHDVNNDGFLDEQELEALFTRELEKVYNPQNAEDDMIEMEEERLRMREHVMSEIDNNKDRLVTLEEFLRATEKKEFLEPDSWETLDQQQLFTEDELKEYESIIAIQENELKKRAEELQKQKEDLQRQHDHLEAQKQEYHQAVQHLEQKKLQQGIAPSGPAGELKFEPHT</sequence>
<reference key="1">
    <citation type="journal article" date="2000" name="J. Biol. Chem.">
        <title>The postmitotic growth suppressor necdin interacts with a calcium-binding protein (NEFA) in neuronal cytoplasm.</title>
        <authorList>
            <person name="Taniguchi N."/>
            <person name="Taniura H."/>
            <person name="Niinobe M."/>
            <person name="Takayama C."/>
            <person name="Tominaga-Yoshino K."/>
            <person name="Ogura A."/>
            <person name="Yoshikawa K."/>
        </authorList>
    </citation>
    <scope>NUCLEOTIDE SEQUENCE [MRNA]</scope>
    <scope>FUNCTION</scope>
    <scope>SUBUNIT</scope>
    <scope>SUBCELLULAR LOCATION</scope>
    <scope>TISSUE SPECIFICITY</scope>
</reference>
<reference key="2">
    <citation type="submission" date="1997-11" db="EMBL/GenBank/DDBJ databases">
        <title>cDNA sequence analysis of mouse NEFA gene.</title>
        <authorList>
            <person name="Hoefig K."/>
            <person name="Barnikol-Watanabe S."/>
            <person name="Barnikol H.U."/>
            <person name="Hilschmann N."/>
        </authorList>
    </citation>
    <scope>NUCLEOTIDE SEQUENCE [MRNA]</scope>
    <source>
        <strain>Swiss Webster / NIH</strain>
        <tissue>Embryo</tissue>
    </source>
</reference>
<reference key="3">
    <citation type="journal article" date="2004" name="Genome Res.">
        <title>The status, quality, and expansion of the NIH full-length cDNA project: the Mammalian Gene Collection (MGC).</title>
        <authorList>
            <consortium name="The MGC Project Team"/>
        </authorList>
    </citation>
    <scope>NUCLEOTIDE SEQUENCE [LARGE SCALE MRNA]</scope>
    <source>
        <strain>FVB/N</strain>
        <tissue>Mammary tumor</tissue>
    </source>
</reference>
<reference key="4">
    <citation type="journal article" date="2010" name="Cell">
        <title>A tissue-specific atlas of mouse protein phosphorylation and expression.</title>
        <authorList>
            <person name="Huttlin E.L."/>
            <person name="Jedrychowski M.P."/>
            <person name="Elias J.E."/>
            <person name="Goswami T."/>
            <person name="Rad R."/>
            <person name="Beausoleil S.A."/>
            <person name="Villen J."/>
            <person name="Haas W."/>
            <person name="Sowa M.E."/>
            <person name="Gygi S.P."/>
        </authorList>
    </citation>
    <scope>IDENTIFICATION BY MASS SPECTROMETRY [LARGE SCALE ANALYSIS]</scope>
    <source>
        <tissue>Brown adipose tissue</tissue>
        <tissue>Heart</tissue>
        <tissue>Kidney</tissue>
        <tissue>Lung</tissue>
        <tissue>Pancreas</tissue>
        <tissue>Spleen</tissue>
        <tissue>Testis</tissue>
    </source>
</reference>
<dbReference type="EMBL" id="AJ222586">
    <property type="protein sequence ID" value="CAA10858.1"/>
    <property type="molecule type" value="mRNA"/>
</dbReference>
<dbReference type="EMBL" id="BC010459">
    <property type="protein sequence ID" value="AAH10459.1"/>
    <property type="molecule type" value="mRNA"/>
</dbReference>
<dbReference type="CCDS" id="CCDS52372.1"/>
<dbReference type="RefSeq" id="NP_001123951.1">
    <property type="nucleotide sequence ID" value="NM_001130479.2"/>
</dbReference>
<dbReference type="RefSeq" id="NP_001347304.1">
    <property type="nucleotide sequence ID" value="NM_001360375.1"/>
</dbReference>
<dbReference type="RefSeq" id="XP_006508087.1">
    <property type="nucleotide sequence ID" value="XM_006508024.2"/>
</dbReference>
<dbReference type="RefSeq" id="XP_006508088.1">
    <property type="nucleotide sequence ID" value="XM_006508025.4"/>
</dbReference>
<dbReference type="SMR" id="P81117"/>
<dbReference type="BioGRID" id="207285">
    <property type="interactions" value="9"/>
</dbReference>
<dbReference type="FunCoup" id="P81117">
    <property type="interactions" value="2969"/>
</dbReference>
<dbReference type="STRING" id="10090.ENSMUSP00000032895"/>
<dbReference type="GlyGen" id="P81117">
    <property type="glycosylation" value="1 site, 1 O-linked glycan (1 site)"/>
</dbReference>
<dbReference type="iPTMnet" id="P81117"/>
<dbReference type="PhosphoSitePlus" id="P81117"/>
<dbReference type="jPOST" id="P81117"/>
<dbReference type="PaxDb" id="10090-ENSMUSP00000032895"/>
<dbReference type="PeptideAtlas" id="P81117"/>
<dbReference type="ProteomicsDB" id="291921"/>
<dbReference type="Pumba" id="P81117"/>
<dbReference type="Antibodypedia" id="1610">
    <property type="antibodies" value="323 antibodies from 30 providers"/>
</dbReference>
<dbReference type="DNASU" id="53322"/>
<dbReference type="Ensembl" id="ENSMUST00000032895.15">
    <property type="protein sequence ID" value="ENSMUSP00000032895.8"/>
    <property type="gene ID" value="ENSMUSG00000030659.15"/>
</dbReference>
<dbReference type="GeneID" id="53322"/>
<dbReference type="KEGG" id="mmu:53322"/>
<dbReference type="UCSC" id="uc009jjk.3">
    <property type="organism name" value="mouse"/>
</dbReference>
<dbReference type="AGR" id="MGI:1858179"/>
<dbReference type="CTD" id="4925"/>
<dbReference type="MGI" id="MGI:1858179">
    <property type="gene designation" value="Nucb2"/>
</dbReference>
<dbReference type="VEuPathDB" id="HostDB:ENSMUSG00000030659"/>
<dbReference type="eggNOG" id="KOG3866">
    <property type="taxonomic scope" value="Eukaryota"/>
</dbReference>
<dbReference type="GeneTree" id="ENSGT00390000001927"/>
<dbReference type="HOGENOM" id="CLU_031153_1_0_1"/>
<dbReference type="InParanoid" id="P81117"/>
<dbReference type="OMA" id="QETDTNH"/>
<dbReference type="OrthoDB" id="5982823at2759"/>
<dbReference type="PhylomeDB" id="P81117"/>
<dbReference type="TreeFam" id="TF323218"/>
<dbReference type="BioGRID-ORCS" id="53322">
    <property type="hits" value="1 hit in 76 CRISPR screens"/>
</dbReference>
<dbReference type="ChiTaRS" id="Nucb2">
    <property type="organism name" value="mouse"/>
</dbReference>
<dbReference type="PRO" id="PR:P81117"/>
<dbReference type="Proteomes" id="UP000000589">
    <property type="component" value="Chromosome 7"/>
</dbReference>
<dbReference type="RNAct" id="P81117">
    <property type="molecule type" value="protein"/>
</dbReference>
<dbReference type="Bgee" id="ENSMUSG00000030659">
    <property type="expression patterns" value="Expressed in seminal vesicle and 240 other cell types or tissues"/>
</dbReference>
<dbReference type="ExpressionAtlas" id="P81117">
    <property type="expression patterns" value="baseline and differential"/>
</dbReference>
<dbReference type="GO" id="GO:0005737">
    <property type="term" value="C:cytoplasm"/>
    <property type="evidence" value="ECO:0000314"/>
    <property type="project" value="MGI"/>
</dbReference>
<dbReference type="GO" id="GO:0005783">
    <property type="term" value="C:endoplasmic reticulum"/>
    <property type="evidence" value="ECO:0000314"/>
    <property type="project" value="MGI"/>
</dbReference>
<dbReference type="GO" id="GO:0005793">
    <property type="term" value="C:endoplasmic reticulum-Golgi intermediate compartment"/>
    <property type="evidence" value="ECO:0007669"/>
    <property type="project" value="Ensembl"/>
</dbReference>
<dbReference type="GO" id="GO:0005576">
    <property type="term" value="C:extracellular region"/>
    <property type="evidence" value="ECO:0007669"/>
    <property type="project" value="UniProtKB-SubCell"/>
</dbReference>
<dbReference type="GO" id="GO:0005794">
    <property type="term" value="C:Golgi apparatus"/>
    <property type="evidence" value="ECO:0007669"/>
    <property type="project" value="UniProtKB-SubCell"/>
</dbReference>
<dbReference type="GO" id="GO:0005640">
    <property type="term" value="C:nuclear outer membrane"/>
    <property type="evidence" value="ECO:0000314"/>
    <property type="project" value="MGI"/>
</dbReference>
<dbReference type="GO" id="GO:0005634">
    <property type="term" value="C:nucleus"/>
    <property type="evidence" value="ECO:0000314"/>
    <property type="project" value="MGI"/>
</dbReference>
<dbReference type="GO" id="GO:0043204">
    <property type="term" value="C:perikaryon"/>
    <property type="evidence" value="ECO:0007669"/>
    <property type="project" value="UniProtKB-SubCell"/>
</dbReference>
<dbReference type="GO" id="GO:0005509">
    <property type="term" value="F:calcium ion binding"/>
    <property type="evidence" value="ECO:0000314"/>
    <property type="project" value="MGI"/>
</dbReference>
<dbReference type="GO" id="GO:0003677">
    <property type="term" value="F:DNA binding"/>
    <property type="evidence" value="ECO:0007669"/>
    <property type="project" value="UniProtKB-KW"/>
</dbReference>
<dbReference type="GO" id="GO:0001965">
    <property type="term" value="F:G-protein alpha-subunit binding"/>
    <property type="evidence" value="ECO:0000250"/>
    <property type="project" value="UniProtKB"/>
</dbReference>
<dbReference type="GO" id="GO:0005085">
    <property type="term" value="F:guanyl-nucleotide exchange factor activity"/>
    <property type="evidence" value="ECO:0000250"/>
    <property type="project" value="UniProtKB"/>
</dbReference>
<dbReference type="GO" id="GO:0006874">
    <property type="term" value="P:intracellular calcium ion homeostasis"/>
    <property type="evidence" value="ECO:0000304"/>
    <property type="project" value="MGI"/>
</dbReference>
<dbReference type="GO" id="GO:0007264">
    <property type="term" value="P:small GTPase-mediated signal transduction"/>
    <property type="evidence" value="ECO:0000250"/>
    <property type="project" value="UniProtKB"/>
</dbReference>
<dbReference type="FunFam" id="1.10.238.10:FF:000045">
    <property type="entry name" value="Nucleobindin 2"/>
    <property type="match status" value="1"/>
</dbReference>
<dbReference type="Gene3D" id="1.10.238.10">
    <property type="entry name" value="EF-hand"/>
    <property type="match status" value="1"/>
</dbReference>
<dbReference type="InterPro" id="IPR011992">
    <property type="entry name" value="EF-hand-dom_pair"/>
</dbReference>
<dbReference type="InterPro" id="IPR018247">
    <property type="entry name" value="EF_Hand_1_Ca_BS"/>
</dbReference>
<dbReference type="InterPro" id="IPR002048">
    <property type="entry name" value="EF_hand_dom"/>
</dbReference>
<dbReference type="InterPro" id="IPR040250">
    <property type="entry name" value="Nucleobindin"/>
</dbReference>
<dbReference type="PANTHER" id="PTHR19237">
    <property type="entry name" value="NUCLEOBINDIN"/>
    <property type="match status" value="1"/>
</dbReference>
<dbReference type="PANTHER" id="PTHR19237:SF22">
    <property type="entry name" value="NUCLEOBINDIN-2"/>
    <property type="match status" value="1"/>
</dbReference>
<dbReference type="Pfam" id="PF13499">
    <property type="entry name" value="EF-hand_7"/>
    <property type="match status" value="1"/>
</dbReference>
<dbReference type="Pfam" id="PF25434">
    <property type="entry name" value="NUCB1_N"/>
    <property type="match status" value="1"/>
</dbReference>
<dbReference type="SMART" id="SM00054">
    <property type="entry name" value="EFh"/>
    <property type="match status" value="2"/>
</dbReference>
<dbReference type="SUPFAM" id="SSF47473">
    <property type="entry name" value="EF-hand"/>
    <property type="match status" value="1"/>
</dbReference>
<dbReference type="PROSITE" id="PS00018">
    <property type="entry name" value="EF_HAND_1"/>
    <property type="match status" value="2"/>
</dbReference>
<dbReference type="PROSITE" id="PS50222">
    <property type="entry name" value="EF_HAND_2"/>
    <property type="match status" value="2"/>
</dbReference>
<organism>
    <name type="scientific">Mus musculus</name>
    <name type="common">Mouse</name>
    <dbReference type="NCBI Taxonomy" id="10090"/>
    <lineage>
        <taxon>Eukaryota</taxon>
        <taxon>Metazoa</taxon>
        <taxon>Chordata</taxon>
        <taxon>Craniata</taxon>
        <taxon>Vertebrata</taxon>
        <taxon>Euteleostomi</taxon>
        <taxon>Mammalia</taxon>
        <taxon>Eutheria</taxon>
        <taxon>Euarchontoglires</taxon>
        <taxon>Glires</taxon>
        <taxon>Rodentia</taxon>
        <taxon>Myomorpha</taxon>
        <taxon>Muroidea</taxon>
        <taxon>Muridae</taxon>
        <taxon>Murinae</taxon>
        <taxon>Mus</taxon>
        <taxon>Mus</taxon>
    </lineage>
</organism>
<gene>
    <name type="primary">Nucb2</name>
    <name type="synonym">Nefa</name>
</gene>
<protein>
    <recommendedName>
        <fullName>Nucleobindin-2</fullName>
    </recommendedName>
    <alternativeName>
        <fullName>DNA-binding protein NEFA</fullName>
    </alternativeName>
    <alternativeName>
        <fullName>Prepronesfatin</fullName>
    </alternativeName>
    <component>
        <recommendedName>
            <fullName>Nesfatin-1</fullName>
        </recommendedName>
    </component>
</protein>
<accession>P81117</accession>
<proteinExistence type="evidence at protein level"/>
<comment type="function">
    <text evidence="3 7">Calcium-binding protein which may have a role in calcium homeostasis (PubMed:10915798). Acts as a non-receptor guanine nucleotide exchange factor which binds to and activates guanine nucleotide-binding protein (G-protein) alpha subunit GNAI3 (By similarity).</text>
</comment>
<comment type="function">
    <molecule>Nesfatin-1</molecule>
    <text evidence="2 3">Anorexigenic peptide, seems to play an important role in hypothalamic pathways regulating food intake and energy homeostasis, acting in a leptin-independent manner. May also exert hypertensive roles and modulate blood pressure through directly acting on peripheral arterial resistance. In intestinal epithelial cells, plays a role in the inhibition of hepatic glucose production via MC4R receptor leading to increased cyclic adenosine monophosphate (cAMP) levels and glucagon-like peptide 1 (GLP-1) secretion (By similarity).</text>
</comment>
<comment type="subunit">
    <text evidence="2 3 7">Interacts (via GBA motif) with guanine nucleotide-binding protein G(i) alpha subunit GNAI3 (By similarity). Preferentially interacts with inactive rather than active GNAI3 (By similarity). Interaction with GNAI3 is inhibited when NUCB2 binds calcium, probably due to a conformational change which renders the GBA motif inaccessible (By similarity). Binds to the postmitotic growth suppressor NDN; coexpression abolishes NUCB2 secretion (PubMed:10915798). Interacts with MC4R (By similarity).</text>
</comment>
<comment type="subcellular location">
    <subcellularLocation>
        <location evidence="7">Cytoplasm</location>
    </subcellularLocation>
    <subcellularLocation>
        <location evidence="7">Perikaryon</location>
    </subcellularLocation>
    <subcellularLocation>
        <location evidence="7">Endoplasmic reticulum</location>
    </subcellularLocation>
    <subcellularLocation>
        <location evidence="1">Golgi apparatus</location>
    </subcellularLocation>
    <subcellularLocation>
        <location evidence="7">Nucleus envelope</location>
    </subcellularLocation>
    <subcellularLocation>
        <location evidence="1">Membrane</location>
        <topology evidence="1">Peripheral membrane protein</topology>
    </subcellularLocation>
    <subcellularLocation>
        <location evidence="7">Secreted</location>
    </subcellularLocation>
    <text>In dendrites and perikarya of brain neurons. Abundant in the ER cisternae and nuclear envelope, but not detected in Golgi, mitochondria or nucleoplasm in neurons. In cell culture, cytoplasmic and secreted.</text>
</comment>
<comment type="subcellular location">
    <molecule>Nesfatin-1</molecule>
    <subcellularLocation>
        <location evidence="1">Secreted</location>
    </subcellularLocation>
</comment>
<comment type="tissue specificity">
    <text evidence="7">Found in liver, heart, thymus, muscle, intestine, kidney, lung, spleen and throughout the brain, in cerebral cortex, hippocampus, hypothalamus and medulla oblongata. Nucb2 and necdin levels were higher in postmitotic neurons.</text>
</comment>
<comment type="domain">
    <text evidence="3">The GBA (G-alpha binding and activating) motif mediates binding to the alpha subunits of guanine nucleotide-binding proteins (G proteins).</text>
</comment>
<comment type="similarity">
    <text evidence="8">Belongs to the nucleobindin family.</text>
</comment>
<keyword id="KW-0106">Calcium</keyword>
<keyword id="KW-0165">Cleavage on pair of basic residues</keyword>
<keyword id="KW-0963">Cytoplasm</keyword>
<keyword id="KW-0238">DNA-binding</keyword>
<keyword id="KW-0256">Endoplasmic reticulum</keyword>
<keyword id="KW-0333">Golgi apparatus</keyword>
<keyword id="KW-0344">Guanine-nucleotide releasing factor</keyword>
<keyword id="KW-0472">Membrane</keyword>
<keyword id="KW-0479">Metal-binding</keyword>
<keyword id="KW-0539">Nucleus</keyword>
<keyword id="KW-0597">Phosphoprotein</keyword>
<keyword id="KW-1185">Reference proteome</keyword>
<keyword id="KW-0677">Repeat</keyword>
<keyword id="KW-0964">Secreted</keyword>
<keyword id="KW-0732">Signal</keyword>